<sequence>MPGVVSWSQLVNPSYVAILPHLIVTATLLVVIVLDAYFKEKRSLVWVTLGGVVLAMLSIWYTASDPQIQAGIAAGRPPEFWGGMIIADGFTFFMNGVLLGIAALVILLSADYVGKFLRGAHMEFYEIILAVTLGMMFMVSSRDLLTIYIGLELTSISSYVLAGILRKDAKSNEAALKYFLTGATASAVLLFGLSLIYGVTGSTRLPEVAAALAGGSHVVAAAGPALTPLLVAGMAFLMVGFGFKVAAVPVHQWAPDVYEGAPTPVTAFFSAGPKGAAMAAILRVFVGGLGVAPFTDKWALIWALAAAASMTVGNLVALQQTNIKRMMAYSSIAQAGYILVGVAASGLQSVEGISSVLFYVMAYAVTNLGIFAVLTHMDQEGGWVEVDNYAGLAKRNPLYAWALLLFFVSLIGIPPTVGFLGKFFLFRAAAASGYLWLAVLMAVNSVISVGYYYRVVKVMFLDQSDYPALTPSTGISATVLLSLLGVVALTIFANPFVQWTAQSAALLH</sequence>
<organism>
    <name type="scientific">Symbiobacterium thermophilum (strain DSM 24528 / JCM 14929 / IAM 14863 / T)</name>
    <dbReference type="NCBI Taxonomy" id="292459"/>
    <lineage>
        <taxon>Bacteria</taxon>
        <taxon>Bacillati</taxon>
        <taxon>Bacillota</taxon>
        <taxon>Clostridia</taxon>
        <taxon>Eubacteriales</taxon>
        <taxon>Symbiobacteriaceae</taxon>
        <taxon>Symbiobacterium</taxon>
    </lineage>
</organism>
<accession>Q67KP6</accession>
<name>NUON2_SYMTH</name>
<reference key="1">
    <citation type="journal article" date="2004" name="Nucleic Acids Res.">
        <title>Genome sequence of Symbiobacterium thermophilum, an uncultivable bacterium that depends on microbial commensalism.</title>
        <authorList>
            <person name="Ueda K."/>
            <person name="Yamashita A."/>
            <person name="Ishikawa J."/>
            <person name="Shimada M."/>
            <person name="Watsuji T."/>
            <person name="Morimura K."/>
            <person name="Ikeda H."/>
            <person name="Hattori M."/>
            <person name="Beppu T."/>
        </authorList>
    </citation>
    <scope>NUCLEOTIDE SEQUENCE [LARGE SCALE GENOMIC DNA]</scope>
    <source>
        <strain>DSM 24528 / JCM 14929 / IAM 14863 / T</strain>
    </source>
</reference>
<comment type="function">
    <text evidence="1">NDH-1 shuttles electrons from NADH, via FMN and iron-sulfur (Fe-S) centers, to quinones in the respiratory chain. The immediate electron acceptor for the enzyme in this species is believed to be a menaquinone. Couples the redox reaction to proton translocation (for every two electrons transferred, four hydrogen ions are translocated across the cytoplasmic membrane), and thus conserves the redox energy in a proton gradient.</text>
</comment>
<comment type="catalytic activity">
    <reaction evidence="1">
        <text>a quinone + NADH + 5 H(+)(in) = a quinol + NAD(+) + 4 H(+)(out)</text>
        <dbReference type="Rhea" id="RHEA:57888"/>
        <dbReference type="ChEBI" id="CHEBI:15378"/>
        <dbReference type="ChEBI" id="CHEBI:24646"/>
        <dbReference type="ChEBI" id="CHEBI:57540"/>
        <dbReference type="ChEBI" id="CHEBI:57945"/>
        <dbReference type="ChEBI" id="CHEBI:132124"/>
    </reaction>
</comment>
<comment type="subunit">
    <text evidence="1">NDH-1 is composed of 14 different subunits. Subunits NuoA, H, J, K, L, M, N constitute the membrane sector of the complex.</text>
</comment>
<comment type="subcellular location">
    <subcellularLocation>
        <location evidence="1">Cell membrane</location>
        <topology evidence="1">Multi-pass membrane protein</topology>
    </subcellularLocation>
</comment>
<comment type="similarity">
    <text evidence="1">Belongs to the complex I subunit 2 family.</text>
</comment>
<feature type="chain" id="PRO_0000391234" description="NADH-quinone oxidoreductase subunit N 2">
    <location>
        <begin position="1"/>
        <end position="508"/>
    </location>
</feature>
<feature type="transmembrane region" description="Helical" evidence="1">
    <location>
        <begin position="14"/>
        <end position="34"/>
    </location>
</feature>
<feature type="transmembrane region" description="Helical" evidence="1">
    <location>
        <begin position="43"/>
        <end position="63"/>
    </location>
</feature>
<feature type="transmembrane region" description="Helical" evidence="1">
    <location>
        <begin position="90"/>
        <end position="110"/>
    </location>
</feature>
<feature type="transmembrane region" description="Helical" evidence="1">
    <location>
        <begin position="119"/>
        <end position="139"/>
    </location>
</feature>
<feature type="transmembrane region" description="Helical" evidence="1">
    <location>
        <begin position="144"/>
        <end position="164"/>
    </location>
</feature>
<feature type="transmembrane region" description="Helical" evidence="1">
    <location>
        <begin position="179"/>
        <end position="199"/>
    </location>
</feature>
<feature type="transmembrane region" description="Helical" evidence="1">
    <location>
        <begin position="223"/>
        <end position="243"/>
    </location>
</feature>
<feature type="transmembrane region" description="Helical" evidence="1">
    <location>
        <begin position="275"/>
        <end position="295"/>
    </location>
</feature>
<feature type="transmembrane region" description="Helical" evidence="1">
    <location>
        <begin position="298"/>
        <end position="318"/>
    </location>
</feature>
<feature type="transmembrane region" description="Helical" evidence="1">
    <location>
        <begin position="327"/>
        <end position="347"/>
    </location>
</feature>
<feature type="transmembrane region" description="Helical" evidence="1">
    <location>
        <begin position="353"/>
        <end position="373"/>
    </location>
</feature>
<feature type="transmembrane region" description="Helical" evidence="1">
    <location>
        <begin position="400"/>
        <end position="420"/>
    </location>
</feature>
<feature type="transmembrane region" description="Helical" evidence="1">
    <location>
        <begin position="433"/>
        <end position="455"/>
    </location>
</feature>
<feature type="transmembrane region" description="Helical" evidence="1">
    <location>
        <begin position="473"/>
        <end position="493"/>
    </location>
</feature>
<dbReference type="EC" id="7.1.1.-" evidence="1"/>
<dbReference type="EMBL" id="AP006840">
    <property type="protein sequence ID" value="BAD41752.1"/>
    <property type="molecule type" value="Genomic_DNA"/>
</dbReference>
<dbReference type="RefSeq" id="WP_011196886.1">
    <property type="nucleotide sequence ID" value="NC_006177.1"/>
</dbReference>
<dbReference type="SMR" id="Q67KP6"/>
<dbReference type="STRING" id="292459.STH2767"/>
<dbReference type="KEGG" id="sth:STH2767"/>
<dbReference type="eggNOG" id="COG1007">
    <property type="taxonomic scope" value="Bacteria"/>
</dbReference>
<dbReference type="HOGENOM" id="CLU_007100_1_5_9"/>
<dbReference type="OrthoDB" id="9807568at2"/>
<dbReference type="Proteomes" id="UP000000417">
    <property type="component" value="Chromosome"/>
</dbReference>
<dbReference type="GO" id="GO:0005886">
    <property type="term" value="C:plasma membrane"/>
    <property type="evidence" value="ECO:0007669"/>
    <property type="project" value="UniProtKB-SubCell"/>
</dbReference>
<dbReference type="GO" id="GO:0008137">
    <property type="term" value="F:NADH dehydrogenase (ubiquinone) activity"/>
    <property type="evidence" value="ECO:0007669"/>
    <property type="project" value="InterPro"/>
</dbReference>
<dbReference type="GO" id="GO:0050136">
    <property type="term" value="F:NADH:ubiquinone reductase (non-electrogenic) activity"/>
    <property type="evidence" value="ECO:0007669"/>
    <property type="project" value="UniProtKB-UniRule"/>
</dbReference>
<dbReference type="GO" id="GO:0048038">
    <property type="term" value="F:quinone binding"/>
    <property type="evidence" value="ECO:0007669"/>
    <property type="project" value="UniProtKB-KW"/>
</dbReference>
<dbReference type="GO" id="GO:0042773">
    <property type="term" value="P:ATP synthesis coupled electron transport"/>
    <property type="evidence" value="ECO:0007669"/>
    <property type="project" value="InterPro"/>
</dbReference>
<dbReference type="HAMAP" id="MF_00445">
    <property type="entry name" value="NDH1_NuoN_1"/>
    <property type="match status" value="1"/>
</dbReference>
<dbReference type="InterPro" id="IPR010096">
    <property type="entry name" value="NADH-Q_OxRdtase_suN/2"/>
</dbReference>
<dbReference type="InterPro" id="IPR001750">
    <property type="entry name" value="ND/Mrp_TM"/>
</dbReference>
<dbReference type="NCBIfam" id="TIGR01770">
    <property type="entry name" value="NDH_I_N"/>
    <property type="match status" value="1"/>
</dbReference>
<dbReference type="PANTHER" id="PTHR22773">
    <property type="entry name" value="NADH DEHYDROGENASE"/>
    <property type="match status" value="1"/>
</dbReference>
<dbReference type="Pfam" id="PF00361">
    <property type="entry name" value="Proton_antipo_M"/>
    <property type="match status" value="1"/>
</dbReference>
<dbReference type="PRINTS" id="PR01434">
    <property type="entry name" value="NADHDHGNASE5"/>
</dbReference>
<protein>
    <recommendedName>
        <fullName evidence="1">NADH-quinone oxidoreductase subunit N 2</fullName>
        <ecNumber evidence="1">7.1.1.-</ecNumber>
    </recommendedName>
    <alternativeName>
        <fullName evidence="1">NADH dehydrogenase I subunit N 2</fullName>
    </alternativeName>
    <alternativeName>
        <fullName evidence="1">NDH-1 subunit N 2</fullName>
    </alternativeName>
</protein>
<keyword id="KW-1003">Cell membrane</keyword>
<keyword id="KW-0472">Membrane</keyword>
<keyword id="KW-0520">NAD</keyword>
<keyword id="KW-0874">Quinone</keyword>
<keyword id="KW-1185">Reference proteome</keyword>
<keyword id="KW-1278">Translocase</keyword>
<keyword id="KW-0812">Transmembrane</keyword>
<keyword id="KW-1133">Transmembrane helix</keyword>
<keyword id="KW-0813">Transport</keyword>
<evidence type="ECO:0000255" key="1">
    <source>
        <dbReference type="HAMAP-Rule" id="MF_00445"/>
    </source>
</evidence>
<proteinExistence type="inferred from homology"/>
<gene>
    <name evidence="1" type="primary">nuoN2</name>
    <name type="ordered locus">STH2767</name>
</gene>